<comment type="subcellular location">
    <subcellularLocation>
        <location evidence="1">Secreted</location>
    </subcellularLocation>
</comment>
<comment type="similarity">
    <text evidence="3">Belongs to the DEFL family.</text>
</comment>
<dbReference type="EMBL" id="AL049482">
    <property type="status" value="NOT_ANNOTATED_CDS"/>
    <property type="molecule type" value="Genomic_DNA"/>
</dbReference>
<dbReference type="EMBL" id="AL161515">
    <property type="status" value="NOT_ANNOTATED_CDS"/>
    <property type="molecule type" value="Genomic_DNA"/>
</dbReference>
<dbReference type="EMBL" id="CP002687">
    <property type="protein sequence ID" value="AEE82799.1"/>
    <property type="molecule type" value="Genomic_DNA"/>
</dbReference>
<dbReference type="RefSeq" id="NP_001031606.1">
    <property type="nucleotide sequence ID" value="NM_001036529.2"/>
</dbReference>
<dbReference type="STRING" id="3702.P82728"/>
<dbReference type="PaxDb" id="3702-AT4G09795.1"/>
<dbReference type="EnsemblPlants" id="AT4G09795.1">
    <property type="protein sequence ID" value="AT4G09795.1"/>
    <property type="gene ID" value="AT4G09795"/>
</dbReference>
<dbReference type="GeneID" id="3770466"/>
<dbReference type="Gramene" id="AT4G09795.1">
    <property type="protein sequence ID" value="AT4G09795.1"/>
    <property type="gene ID" value="AT4G09795"/>
</dbReference>
<dbReference type="KEGG" id="ath:AT4G09795"/>
<dbReference type="Araport" id="AT4G09795"/>
<dbReference type="TAIR" id="AT4G09795">
    <property type="gene designation" value="LCR13"/>
</dbReference>
<dbReference type="HOGENOM" id="CLU_182511_2_0_1"/>
<dbReference type="InParanoid" id="P82728"/>
<dbReference type="OMA" id="CHEYLYP"/>
<dbReference type="PhylomeDB" id="P82728"/>
<dbReference type="PRO" id="PR:P82728"/>
<dbReference type="Proteomes" id="UP000006548">
    <property type="component" value="Chromosome 4"/>
</dbReference>
<dbReference type="ExpressionAtlas" id="P82728">
    <property type="expression patterns" value="baseline"/>
</dbReference>
<dbReference type="GO" id="GO:0005576">
    <property type="term" value="C:extracellular region"/>
    <property type="evidence" value="ECO:0007669"/>
    <property type="project" value="UniProtKB-SubCell"/>
</dbReference>
<dbReference type="GO" id="GO:0050832">
    <property type="term" value="P:defense response to fungus"/>
    <property type="evidence" value="ECO:0007669"/>
    <property type="project" value="UniProtKB-KW"/>
</dbReference>
<dbReference type="GO" id="GO:0031640">
    <property type="term" value="P:killing of cells of another organism"/>
    <property type="evidence" value="ECO:0007669"/>
    <property type="project" value="UniProtKB-KW"/>
</dbReference>
<dbReference type="InterPro" id="IPR010851">
    <property type="entry name" value="DEFL"/>
</dbReference>
<dbReference type="PANTHER" id="PTHR33830:SF10">
    <property type="entry name" value="DEFENSIN-LIKE PROTEIN 122-RELATED"/>
    <property type="match status" value="1"/>
</dbReference>
<dbReference type="PANTHER" id="PTHR33830">
    <property type="entry name" value="DEFENSIN-LIKE PROTEIN 184-RELATED"/>
    <property type="match status" value="1"/>
</dbReference>
<dbReference type="Pfam" id="PF07333">
    <property type="entry name" value="SLR1-BP"/>
    <property type="match status" value="1"/>
</dbReference>
<evidence type="ECO:0000250" key="1"/>
<evidence type="ECO:0000255" key="2"/>
<evidence type="ECO:0000305" key="3"/>
<protein>
    <recommendedName>
        <fullName>Putative defensin-like protein 129</fullName>
    </recommendedName>
    <alternativeName>
        <fullName>Putative low-molecular-weight cysteine-rich protein 13</fullName>
        <shortName>Protein LCR13</shortName>
    </alternativeName>
</protein>
<feature type="signal peptide" evidence="2">
    <location>
        <begin position="1"/>
        <end position="25"/>
    </location>
</feature>
<feature type="chain" id="PRO_0000017255" description="Putative defensin-like protein 129">
    <location>
        <begin position="26"/>
        <end position="77"/>
    </location>
</feature>
<feature type="disulfide bond" evidence="1">
    <location>
        <begin position="28"/>
        <end position="77"/>
    </location>
</feature>
<feature type="disulfide bond" evidence="1">
    <location>
        <begin position="37"/>
        <end position="59"/>
    </location>
</feature>
<feature type="disulfide bond" evidence="1">
    <location>
        <begin position="42"/>
        <end position="71"/>
    </location>
</feature>
<feature type="disulfide bond" evidence="1">
    <location>
        <begin position="46"/>
        <end position="73"/>
    </location>
</feature>
<gene>
    <name type="primary">LCR13</name>
    <name type="ordered locus">At4g09795</name>
    <name type="ORF">F17A8</name>
</gene>
<accession>P82728</accession>
<reference evidence="3" key="1">
    <citation type="journal article" date="1999" name="Nature">
        <title>Sequence and analysis of chromosome 4 of the plant Arabidopsis thaliana.</title>
        <authorList>
            <person name="Mayer K.F.X."/>
            <person name="Schueller C."/>
            <person name="Wambutt R."/>
            <person name="Murphy G."/>
            <person name="Volckaert G."/>
            <person name="Pohl T."/>
            <person name="Duesterhoeft A."/>
            <person name="Stiekema W."/>
            <person name="Entian K.-D."/>
            <person name="Terryn N."/>
            <person name="Harris B."/>
            <person name="Ansorge W."/>
            <person name="Brandt P."/>
            <person name="Grivell L.A."/>
            <person name="Rieger M."/>
            <person name="Weichselgartner M."/>
            <person name="de Simone V."/>
            <person name="Obermaier B."/>
            <person name="Mache R."/>
            <person name="Mueller M."/>
            <person name="Kreis M."/>
            <person name="Delseny M."/>
            <person name="Puigdomenech P."/>
            <person name="Watson M."/>
            <person name="Schmidtheini T."/>
            <person name="Reichert B."/>
            <person name="Portetelle D."/>
            <person name="Perez-Alonso M."/>
            <person name="Boutry M."/>
            <person name="Bancroft I."/>
            <person name="Vos P."/>
            <person name="Hoheisel J."/>
            <person name="Zimmermann W."/>
            <person name="Wedler H."/>
            <person name="Ridley P."/>
            <person name="Langham S.-A."/>
            <person name="McCullagh B."/>
            <person name="Bilham L."/>
            <person name="Robben J."/>
            <person name="van der Schueren J."/>
            <person name="Grymonprez B."/>
            <person name="Chuang Y.-J."/>
            <person name="Vandenbussche F."/>
            <person name="Braeken M."/>
            <person name="Weltjens I."/>
            <person name="Voet M."/>
            <person name="Bastiaens I."/>
            <person name="Aert R."/>
            <person name="Defoor E."/>
            <person name="Weitzenegger T."/>
            <person name="Bothe G."/>
            <person name="Ramsperger U."/>
            <person name="Hilbert H."/>
            <person name="Braun M."/>
            <person name="Holzer E."/>
            <person name="Brandt A."/>
            <person name="Peters S."/>
            <person name="van Staveren M."/>
            <person name="Dirkse W."/>
            <person name="Mooijman P."/>
            <person name="Klein Lankhorst R."/>
            <person name="Rose M."/>
            <person name="Hauf J."/>
            <person name="Koetter P."/>
            <person name="Berneiser S."/>
            <person name="Hempel S."/>
            <person name="Feldpausch M."/>
            <person name="Lamberth S."/>
            <person name="Van den Daele H."/>
            <person name="De Keyser A."/>
            <person name="Buysshaert C."/>
            <person name="Gielen J."/>
            <person name="Villarroel R."/>
            <person name="De Clercq R."/>
            <person name="van Montagu M."/>
            <person name="Rogers J."/>
            <person name="Cronin A."/>
            <person name="Quail M.A."/>
            <person name="Bray-Allen S."/>
            <person name="Clark L."/>
            <person name="Doggett J."/>
            <person name="Hall S."/>
            <person name="Kay M."/>
            <person name="Lennard N."/>
            <person name="McLay K."/>
            <person name="Mayes R."/>
            <person name="Pettett A."/>
            <person name="Rajandream M.A."/>
            <person name="Lyne M."/>
            <person name="Benes V."/>
            <person name="Rechmann S."/>
            <person name="Borkova D."/>
            <person name="Bloecker H."/>
            <person name="Scharfe M."/>
            <person name="Grimm M."/>
            <person name="Loehnert T.-H."/>
            <person name="Dose S."/>
            <person name="de Haan M."/>
            <person name="Maarse A.C."/>
            <person name="Schaefer M."/>
            <person name="Mueller-Auer S."/>
            <person name="Gabel C."/>
            <person name="Fuchs M."/>
            <person name="Fartmann B."/>
            <person name="Granderath K."/>
            <person name="Dauner D."/>
            <person name="Herzl A."/>
            <person name="Neumann S."/>
            <person name="Argiriou A."/>
            <person name="Vitale D."/>
            <person name="Liguori R."/>
            <person name="Piravandi E."/>
            <person name="Massenet O."/>
            <person name="Quigley F."/>
            <person name="Clabauld G."/>
            <person name="Muendlein A."/>
            <person name="Felber R."/>
            <person name="Schnabl S."/>
            <person name="Hiller R."/>
            <person name="Schmidt W."/>
            <person name="Lecharny A."/>
            <person name="Aubourg S."/>
            <person name="Chefdor F."/>
            <person name="Cooke R."/>
            <person name="Berger C."/>
            <person name="Monfort A."/>
            <person name="Casacuberta E."/>
            <person name="Gibbons T."/>
            <person name="Weber N."/>
            <person name="Vandenbol M."/>
            <person name="Bargues M."/>
            <person name="Terol J."/>
            <person name="Torres A."/>
            <person name="Perez-Perez A."/>
            <person name="Purnelle B."/>
            <person name="Bent E."/>
            <person name="Johnson S."/>
            <person name="Tacon D."/>
            <person name="Jesse T."/>
            <person name="Heijnen L."/>
            <person name="Schwarz S."/>
            <person name="Scholler P."/>
            <person name="Heber S."/>
            <person name="Francs P."/>
            <person name="Bielke C."/>
            <person name="Frishman D."/>
            <person name="Haase D."/>
            <person name="Lemcke K."/>
            <person name="Mewes H.-W."/>
            <person name="Stocker S."/>
            <person name="Zaccaria P."/>
            <person name="Bevan M."/>
            <person name="Wilson R.K."/>
            <person name="de la Bastide M."/>
            <person name="Habermann K."/>
            <person name="Parnell L."/>
            <person name="Dedhia N."/>
            <person name="Gnoj L."/>
            <person name="Schutz K."/>
            <person name="Huang E."/>
            <person name="Spiegel L."/>
            <person name="Sekhon M."/>
            <person name="Murray J."/>
            <person name="Sheet P."/>
            <person name="Cordes M."/>
            <person name="Abu-Threideh J."/>
            <person name="Stoneking T."/>
            <person name="Kalicki J."/>
            <person name="Graves T."/>
            <person name="Harmon G."/>
            <person name="Edwards J."/>
            <person name="Latreille P."/>
            <person name="Courtney L."/>
            <person name="Cloud J."/>
            <person name="Abbott A."/>
            <person name="Scott K."/>
            <person name="Johnson D."/>
            <person name="Minx P."/>
            <person name="Bentley D."/>
            <person name="Fulton B."/>
            <person name="Miller N."/>
            <person name="Greco T."/>
            <person name="Kemp K."/>
            <person name="Kramer J."/>
            <person name="Fulton L."/>
            <person name="Mardis E."/>
            <person name="Dante M."/>
            <person name="Pepin K."/>
            <person name="Hillier L.W."/>
            <person name="Nelson J."/>
            <person name="Spieth J."/>
            <person name="Ryan E."/>
            <person name="Andrews S."/>
            <person name="Geisel C."/>
            <person name="Layman D."/>
            <person name="Du H."/>
            <person name="Ali J."/>
            <person name="Berghoff A."/>
            <person name="Jones K."/>
            <person name="Drone K."/>
            <person name="Cotton M."/>
            <person name="Joshu C."/>
            <person name="Antonoiu B."/>
            <person name="Zidanic M."/>
            <person name="Strong C."/>
            <person name="Sun H."/>
            <person name="Lamar B."/>
            <person name="Yordan C."/>
            <person name="Ma P."/>
            <person name="Zhong J."/>
            <person name="Preston R."/>
            <person name="Vil D."/>
            <person name="Shekher M."/>
            <person name="Matero A."/>
            <person name="Shah R."/>
            <person name="Swaby I.K."/>
            <person name="O'Shaughnessy A."/>
            <person name="Rodriguez M."/>
            <person name="Hoffman J."/>
            <person name="Till S."/>
            <person name="Granat S."/>
            <person name="Shohdy N."/>
            <person name="Hasegawa A."/>
            <person name="Hameed A."/>
            <person name="Lodhi M."/>
            <person name="Johnson A."/>
            <person name="Chen E."/>
            <person name="Marra M.A."/>
            <person name="Martienssen R."/>
            <person name="McCombie W.R."/>
        </authorList>
    </citation>
    <scope>NUCLEOTIDE SEQUENCE [LARGE SCALE GENOMIC DNA]</scope>
    <source>
        <strain>cv. Columbia</strain>
    </source>
</reference>
<reference key="2">
    <citation type="journal article" date="2017" name="Plant J.">
        <title>Araport11: a complete reannotation of the Arabidopsis thaliana reference genome.</title>
        <authorList>
            <person name="Cheng C.Y."/>
            <person name="Krishnakumar V."/>
            <person name="Chan A.P."/>
            <person name="Thibaud-Nissen F."/>
            <person name="Schobel S."/>
            <person name="Town C.D."/>
        </authorList>
    </citation>
    <scope>GENOME REANNOTATION</scope>
    <source>
        <strain>cv. Columbia</strain>
    </source>
</reference>
<reference evidence="3" key="3">
    <citation type="journal article" date="2001" name="Plant Mol. Biol.">
        <title>Two large Arabidopsis thaliana gene families are homologous to the Brassica gene superfamily that encodes pollen coat proteins and the male component of the self-incompatibility response.</title>
        <authorList>
            <person name="Vanoosthuyse V."/>
            <person name="Miege C."/>
            <person name="Dumas C."/>
            <person name="Cock J.M."/>
        </authorList>
    </citation>
    <scope>IDENTIFICATION</scope>
</reference>
<reference key="4">
    <citation type="journal article" date="2005" name="Plant Physiol.">
        <title>Genome organization of more than 300 defensin-like genes in Arabidopsis.</title>
        <authorList>
            <person name="Silverstein K.A.T."/>
            <person name="Graham M.A."/>
            <person name="Paape T.D."/>
            <person name="VandenBosch K.A."/>
        </authorList>
    </citation>
    <scope>GENE FAMILY</scope>
</reference>
<organism evidence="3">
    <name type="scientific">Arabidopsis thaliana</name>
    <name type="common">Mouse-ear cress</name>
    <dbReference type="NCBI Taxonomy" id="3702"/>
    <lineage>
        <taxon>Eukaryota</taxon>
        <taxon>Viridiplantae</taxon>
        <taxon>Streptophyta</taxon>
        <taxon>Embryophyta</taxon>
        <taxon>Tracheophyta</taxon>
        <taxon>Spermatophyta</taxon>
        <taxon>Magnoliopsida</taxon>
        <taxon>eudicotyledons</taxon>
        <taxon>Gunneridae</taxon>
        <taxon>Pentapetalae</taxon>
        <taxon>rosids</taxon>
        <taxon>malvids</taxon>
        <taxon>Brassicales</taxon>
        <taxon>Brassicaceae</taxon>
        <taxon>Camelineae</taxon>
        <taxon>Arabidopsis</taxon>
    </lineage>
</organism>
<keyword id="KW-0929">Antimicrobial</keyword>
<keyword id="KW-1015">Disulfide bond</keyword>
<keyword id="KW-0295">Fungicide</keyword>
<keyword id="KW-0611">Plant defense</keyword>
<keyword id="KW-1185">Reference proteome</keyword>
<keyword id="KW-0964">Secreted</keyword>
<keyword id="KW-0732">Signal</keyword>
<name>DF129_ARATH</name>
<sequence>MTKNTALTIFMVVLVIEMVMEETQGDTCHEYLYPEKCENNQCNSECATKFKEVGVFGFCVPPRSEPTEQFCICSYNC</sequence>
<proteinExistence type="inferred from homology"/>